<proteinExistence type="inferred from homology"/>
<accession>A4ST49</accession>
<gene>
    <name evidence="1" type="primary">aroE</name>
    <name type="ordered locus">ASA_4132</name>
</gene>
<protein>
    <recommendedName>
        <fullName evidence="1">Shikimate dehydrogenase (NADP(+))</fullName>
        <shortName evidence="1">SDH</shortName>
        <ecNumber evidence="1">1.1.1.25</ecNumber>
    </recommendedName>
</protein>
<organism>
    <name type="scientific">Aeromonas salmonicida (strain A449)</name>
    <dbReference type="NCBI Taxonomy" id="382245"/>
    <lineage>
        <taxon>Bacteria</taxon>
        <taxon>Pseudomonadati</taxon>
        <taxon>Pseudomonadota</taxon>
        <taxon>Gammaproteobacteria</taxon>
        <taxon>Aeromonadales</taxon>
        <taxon>Aeromonadaceae</taxon>
        <taxon>Aeromonas</taxon>
    </lineage>
</organism>
<comment type="function">
    <text evidence="1">Involved in the biosynthesis of the chorismate, which leads to the biosynthesis of aromatic amino acids. Catalyzes the reversible NADPH linked reduction of 3-dehydroshikimate (DHSA) to yield shikimate (SA).</text>
</comment>
<comment type="catalytic activity">
    <reaction evidence="1">
        <text>shikimate + NADP(+) = 3-dehydroshikimate + NADPH + H(+)</text>
        <dbReference type="Rhea" id="RHEA:17737"/>
        <dbReference type="ChEBI" id="CHEBI:15378"/>
        <dbReference type="ChEBI" id="CHEBI:16630"/>
        <dbReference type="ChEBI" id="CHEBI:36208"/>
        <dbReference type="ChEBI" id="CHEBI:57783"/>
        <dbReference type="ChEBI" id="CHEBI:58349"/>
        <dbReference type="EC" id="1.1.1.25"/>
    </reaction>
</comment>
<comment type="pathway">
    <text evidence="1">Metabolic intermediate biosynthesis; chorismate biosynthesis; chorismate from D-erythrose 4-phosphate and phosphoenolpyruvate: step 4/7.</text>
</comment>
<comment type="subunit">
    <text evidence="1">Homodimer.</text>
</comment>
<comment type="similarity">
    <text evidence="1">Belongs to the shikimate dehydrogenase family.</text>
</comment>
<reference key="1">
    <citation type="journal article" date="2008" name="BMC Genomics">
        <title>The genome of Aeromonas salmonicida subsp. salmonicida A449: insights into the evolution of a fish pathogen.</title>
        <authorList>
            <person name="Reith M.E."/>
            <person name="Singh R.K."/>
            <person name="Curtis B."/>
            <person name="Boyd J.M."/>
            <person name="Bouevitch A."/>
            <person name="Kimball J."/>
            <person name="Munholland J."/>
            <person name="Murphy C."/>
            <person name="Sarty D."/>
            <person name="Williams J."/>
            <person name="Nash J.H."/>
            <person name="Johnson S.C."/>
            <person name="Brown L.L."/>
        </authorList>
    </citation>
    <scope>NUCLEOTIDE SEQUENCE [LARGE SCALE GENOMIC DNA]</scope>
    <source>
        <strain>A449</strain>
    </source>
</reference>
<name>AROE_AERS4</name>
<keyword id="KW-0028">Amino-acid biosynthesis</keyword>
<keyword id="KW-0057">Aromatic amino acid biosynthesis</keyword>
<keyword id="KW-0521">NADP</keyword>
<keyword id="KW-0560">Oxidoreductase</keyword>
<evidence type="ECO:0000255" key="1">
    <source>
        <dbReference type="HAMAP-Rule" id="MF_00222"/>
    </source>
</evidence>
<sequence length="273" mass="29223">MDRYLVFGHPVRHSKSPFIHTLFARQTQQELEYGLAEPAVDEFATTLRAFFAQGGKGCNVTVPFKEQAFALVDSLSPRAKRAGAVNTIKLTDDGVLLGDNTDGAGLVADLKSHGVALAGSRILLLGAGGAARGALAPLLAEHPTELVIANRTHAKAQQLAAEFHDLGVVTALTYEQLGGTFDLIINSTSASLQGELPPLSPALIHADIAIYDMMYGSMDTPFISWAKQYGARQAMDGLGMLVEQAAEAFTVWRGIRPGTKQVLRELKRNLGTL</sequence>
<dbReference type="EC" id="1.1.1.25" evidence="1"/>
<dbReference type="EMBL" id="CP000644">
    <property type="protein sequence ID" value="ABO92071.1"/>
    <property type="molecule type" value="Genomic_DNA"/>
</dbReference>
<dbReference type="RefSeq" id="WP_005319899.1">
    <property type="nucleotide sequence ID" value="NC_009348.1"/>
</dbReference>
<dbReference type="SMR" id="A4ST49"/>
<dbReference type="STRING" id="29491.GCA_000820065_03420"/>
<dbReference type="KEGG" id="asa:ASA_4132"/>
<dbReference type="eggNOG" id="COG0169">
    <property type="taxonomic scope" value="Bacteria"/>
</dbReference>
<dbReference type="HOGENOM" id="CLU_044063_2_1_6"/>
<dbReference type="UniPathway" id="UPA00053">
    <property type="reaction ID" value="UER00087"/>
</dbReference>
<dbReference type="Proteomes" id="UP000000225">
    <property type="component" value="Chromosome"/>
</dbReference>
<dbReference type="GO" id="GO:0005829">
    <property type="term" value="C:cytosol"/>
    <property type="evidence" value="ECO:0007669"/>
    <property type="project" value="TreeGrafter"/>
</dbReference>
<dbReference type="GO" id="GO:0050661">
    <property type="term" value="F:NADP binding"/>
    <property type="evidence" value="ECO:0007669"/>
    <property type="project" value="InterPro"/>
</dbReference>
<dbReference type="GO" id="GO:0004764">
    <property type="term" value="F:shikimate 3-dehydrogenase (NADP+) activity"/>
    <property type="evidence" value="ECO:0007669"/>
    <property type="project" value="UniProtKB-UniRule"/>
</dbReference>
<dbReference type="GO" id="GO:0008652">
    <property type="term" value="P:amino acid biosynthetic process"/>
    <property type="evidence" value="ECO:0007669"/>
    <property type="project" value="UniProtKB-KW"/>
</dbReference>
<dbReference type="GO" id="GO:0009073">
    <property type="term" value="P:aromatic amino acid family biosynthetic process"/>
    <property type="evidence" value="ECO:0007669"/>
    <property type="project" value="UniProtKB-KW"/>
</dbReference>
<dbReference type="GO" id="GO:0009423">
    <property type="term" value="P:chorismate biosynthetic process"/>
    <property type="evidence" value="ECO:0007669"/>
    <property type="project" value="UniProtKB-UniRule"/>
</dbReference>
<dbReference type="GO" id="GO:0019632">
    <property type="term" value="P:shikimate metabolic process"/>
    <property type="evidence" value="ECO:0007669"/>
    <property type="project" value="InterPro"/>
</dbReference>
<dbReference type="CDD" id="cd01065">
    <property type="entry name" value="NAD_bind_Shikimate_DH"/>
    <property type="match status" value="1"/>
</dbReference>
<dbReference type="FunFam" id="3.40.50.10860:FF:000006">
    <property type="entry name" value="Shikimate dehydrogenase (NADP(+))"/>
    <property type="match status" value="1"/>
</dbReference>
<dbReference type="FunFam" id="3.40.50.720:FF:000104">
    <property type="entry name" value="Shikimate dehydrogenase (NADP(+))"/>
    <property type="match status" value="1"/>
</dbReference>
<dbReference type="Gene3D" id="3.40.50.10860">
    <property type="entry name" value="Leucine Dehydrogenase, chain A, domain 1"/>
    <property type="match status" value="1"/>
</dbReference>
<dbReference type="Gene3D" id="3.40.50.720">
    <property type="entry name" value="NAD(P)-binding Rossmann-like Domain"/>
    <property type="match status" value="1"/>
</dbReference>
<dbReference type="HAMAP" id="MF_00222">
    <property type="entry name" value="Shikimate_DH_AroE"/>
    <property type="match status" value="1"/>
</dbReference>
<dbReference type="InterPro" id="IPR046346">
    <property type="entry name" value="Aminoacid_DH-like_N_sf"/>
</dbReference>
<dbReference type="InterPro" id="IPR036291">
    <property type="entry name" value="NAD(P)-bd_dom_sf"/>
</dbReference>
<dbReference type="InterPro" id="IPR041121">
    <property type="entry name" value="SDH_C"/>
</dbReference>
<dbReference type="InterPro" id="IPR011342">
    <property type="entry name" value="Shikimate_DH"/>
</dbReference>
<dbReference type="InterPro" id="IPR013708">
    <property type="entry name" value="Shikimate_DH-bd_N"/>
</dbReference>
<dbReference type="InterPro" id="IPR022893">
    <property type="entry name" value="Shikimate_DH_fam"/>
</dbReference>
<dbReference type="InterPro" id="IPR006151">
    <property type="entry name" value="Shikm_DH/Glu-tRNA_Rdtase"/>
</dbReference>
<dbReference type="NCBIfam" id="TIGR00507">
    <property type="entry name" value="aroE"/>
    <property type="match status" value="1"/>
</dbReference>
<dbReference type="NCBIfam" id="NF001310">
    <property type="entry name" value="PRK00258.1-2"/>
    <property type="match status" value="1"/>
</dbReference>
<dbReference type="PANTHER" id="PTHR21089:SF1">
    <property type="entry name" value="BIFUNCTIONAL 3-DEHYDROQUINATE DEHYDRATASE_SHIKIMATE DEHYDROGENASE, CHLOROPLASTIC"/>
    <property type="match status" value="1"/>
</dbReference>
<dbReference type="PANTHER" id="PTHR21089">
    <property type="entry name" value="SHIKIMATE DEHYDROGENASE"/>
    <property type="match status" value="1"/>
</dbReference>
<dbReference type="Pfam" id="PF18317">
    <property type="entry name" value="SDH_C"/>
    <property type="match status" value="1"/>
</dbReference>
<dbReference type="Pfam" id="PF01488">
    <property type="entry name" value="Shikimate_DH"/>
    <property type="match status" value="1"/>
</dbReference>
<dbReference type="Pfam" id="PF08501">
    <property type="entry name" value="Shikimate_dh_N"/>
    <property type="match status" value="1"/>
</dbReference>
<dbReference type="SUPFAM" id="SSF53223">
    <property type="entry name" value="Aminoacid dehydrogenase-like, N-terminal domain"/>
    <property type="match status" value="1"/>
</dbReference>
<dbReference type="SUPFAM" id="SSF51735">
    <property type="entry name" value="NAD(P)-binding Rossmann-fold domains"/>
    <property type="match status" value="1"/>
</dbReference>
<feature type="chain" id="PRO_1000021254" description="Shikimate dehydrogenase (NADP(+))">
    <location>
        <begin position="1"/>
        <end position="273"/>
    </location>
</feature>
<feature type="active site" description="Proton acceptor" evidence="1">
    <location>
        <position position="65"/>
    </location>
</feature>
<feature type="binding site" evidence="1">
    <location>
        <begin position="14"/>
        <end position="16"/>
    </location>
    <ligand>
        <name>shikimate</name>
        <dbReference type="ChEBI" id="CHEBI:36208"/>
    </ligand>
</feature>
<feature type="binding site" evidence="1">
    <location>
        <position position="61"/>
    </location>
    <ligand>
        <name>shikimate</name>
        <dbReference type="ChEBI" id="CHEBI:36208"/>
    </ligand>
</feature>
<feature type="binding site" evidence="1">
    <location>
        <position position="86"/>
    </location>
    <ligand>
        <name>shikimate</name>
        <dbReference type="ChEBI" id="CHEBI:36208"/>
    </ligand>
</feature>
<feature type="binding site" evidence="1">
    <location>
        <position position="102"/>
    </location>
    <ligand>
        <name>shikimate</name>
        <dbReference type="ChEBI" id="CHEBI:36208"/>
    </ligand>
</feature>
<feature type="binding site" evidence="1">
    <location>
        <begin position="126"/>
        <end position="130"/>
    </location>
    <ligand>
        <name>NADP(+)</name>
        <dbReference type="ChEBI" id="CHEBI:58349"/>
    </ligand>
</feature>
<feature type="binding site" evidence="1">
    <location>
        <begin position="150"/>
        <end position="155"/>
    </location>
    <ligand>
        <name>NADP(+)</name>
        <dbReference type="ChEBI" id="CHEBI:58349"/>
    </ligand>
</feature>
<feature type="binding site" evidence="1">
    <location>
        <position position="213"/>
    </location>
    <ligand>
        <name>NADP(+)</name>
        <dbReference type="ChEBI" id="CHEBI:58349"/>
    </ligand>
</feature>
<feature type="binding site" evidence="1">
    <location>
        <position position="215"/>
    </location>
    <ligand>
        <name>shikimate</name>
        <dbReference type="ChEBI" id="CHEBI:36208"/>
    </ligand>
</feature>
<feature type="binding site" evidence="1">
    <location>
        <position position="237"/>
    </location>
    <ligand>
        <name>NADP(+)</name>
        <dbReference type="ChEBI" id="CHEBI:58349"/>
    </ligand>
</feature>